<proteinExistence type="inferred from homology"/>
<accession>A5V3M9</accession>
<name>ASTB_RHIWR</name>
<sequence>MTATEINFDGLIGPMHNYAGLSPGNIASATNAGAISQPRAAALQGLAKMKRLMDRGLVQGFIPPPRRPAVAALRALGFGGDDRSVIARAAAEDPVLFNNACSASAMWAANAATVIAAPDSGDGRVHLVTANLATMLHRSFEAPDTFATLRTIFADQRHFAVHPALPGTQHFSDEGAANHMRITPRHGERGLDIFVHGAARGSRFPERQAKRAGEAVARLAGADAFHTLQSQAAIEAGAFHNDVVAVANEHVLLAHAAAFEDRDGLFAAAGRAVPDFVAVEVDSIGLDDAISSYLFNSQLLTLPEGGMALVLPSETRENPRVWAAVETILAGNNPINEAIVVDVRESMRNGGGPACLRLRVPVGEEALRAIDPRFLLDERRWEALCALVERHWPERIDAAELADPALWAAAGAAHDALDTLLARV</sequence>
<reference key="1">
    <citation type="journal article" date="2010" name="J. Bacteriol.">
        <title>Genome sequence of the dioxin-mineralizing bacterium Sphingomonas wittichii RW1.</title>
        <authorList>
            <person name="Miller T.R."/>
            <person name="Delcher A.L."/>
            <person name="Salzberg S.L."/>
            <person name="Saunders E."/>
            <person name="Detter J.C."/>
            <person name="Halden R.U."/>
        </authorList>
    </citation>
    <scope>NUCLEOTIDE SEQUENCE [LARGE SCALE GENOMIC DNA]</scope>
    <source>
        <strain>DSM 6014 / CCUG 31198 / JCM 15750 / NBRC 105917 / EY 4224 / RW1</strain>
    </source>
</reference>
<evidence type="ECO:0000255" key="1">
    <source>
        <dbReference type="HAMAP-Rule" id="MF_01172"/>
    </source>
</evidence>
<protein>
    <recommendedName>
        <fullName evidence="1">N-succinylarginine dihydrolase</fullName>
        <ecNumber evidence="1">3.5.3.23</ecNumber>
    </recommendedName>
</protein>
<feature type="chain" id="PRO_1000138031" description="N-succinylarginine dihydrolase">
    <location>
        <begin position="1"/>
        <end position="424"/>
    </location>
</feature>
<feature type="active site" evidence="1">
    <location>
        <position position="174"/>
    </location>
</feature>
<feature type="active site" evidence="1">
    <location>
        <position position="240"/>
    </location>
</feature>
<feature type="active site" description="Nucleophile" evidence="1">
    <location>
        <position position="355"/>
    </location>
</feature>
<feature type="binding site" evidence="1">
    <location>
        <begin position="19"/>
        <end position="28"/>
    </location>
    <ligand>
        <name>substrate</name>
    </ligand>
</feature>
<feature type="binding site" evidence="1">
    <location>
        <position position="110"/>
    </location>
    <ligand>
        <name>substrate</name>
    </ligand>
</feature>
<feature type="binding site" evidence="1">
    <location>
        <begin position="137"/>
        <end position="138"/>
    </location>
    <ligand>
        <name>substrate</name>
    </ligand>
</feature>
<feature type="binding site" evidence="1">
    <location>
        <position position="207"/>
    </location>
    <ligand>
        <name>substrate</name>
    </ligand>
</feature>
<feature type="binding site" evidence="1">
    <location>
        <position position="242"/>
    </location>
    <ligand>
        <name>substrate</name>
    </ligand>
</feature>
<feature type="binding site" evidence="1">
    <location>
        <position position="349"/>
    </location>
    <ligand>
        <name>substrate</name>
    </ligand>
</feature>
<gene>
    <name evidence="1" type="primary">astB</name>
    <name type="ordered locus">Swit_0527</name>
</gene>
<dbReference type="EC" id="3.5.3.23" evidence="1"/>
<dbReference type="EMBL" id="CP000699">
    <property type="protein sequence ID" value="ABQ66895.1"/>
    <property type="molecule type" value="Genomic_DNA"/>
</dbReference>
<dbReference type="SMR" id="A5V3M9"/>
<dbReference type="STRING" id="392499.Swit_0527"/>
<dbReference type="PaxDb" id="392499-Swit_0527"/>
<dbReference type="KEGG" id="swi:Swit_0527"/>
<dbReference type="eggNOG" id="COG3724">
    <property type="taxonomic scope" value="Bacteria"/>
</dbReference>
<dbReference type="HOGENOM" id="CLU_053835_0_0_5"/>
<dbReference type="OrthoDB" id="248552at2"/>
<dbReference type="UniPathway" id="UPA00185">
    <property type="reaction ID" value="UER00280"/>
</dbReference>
<dbReference type="Proteomes" id="UP000001989">
    <property type="component" value="Chromosome"/>
</dbReference>
<dbReference type="GO" id="GO:0009015">
    <property type="term" value="F:N-succinylarginine dihydrolase activity"/>
    <property type="evidence" value="ECO:0007669"/>
    <property type="project" value="UniProtKB-UniRule"/>
</dbReference>
<dbReference type="GO" id="GO:0019544">
    <property type="term" value="P:arginine catabolic process to glutamate"/>
    <property type="evidence" value="ECO:0007669"/>
    <property type="project" value="UniProtKB-UniRule"/>
</dbReference>
<dbReference type="GO" id="GO:0019545">
    <property type="term" value="P:arginine catabolic process to succinate"/>
    <property type="evidence" value="ECO:0007669"/>
    <property type="project" value="UniProtKB-UniRule"/>
</dbReference>
<dbReference type="Gene3D" id="3.75.10.20">
    <property type="entry name" value="Succinylarginine dihydrolase"/>
    <property type="match status" value="1"/>
</dbReference>
<dbReference type="HAMAP" id="MF_01172">
    <property type="entry name" value="AstB"/>
    <property type="match status" value="1"/>
</dbReference>
<dbReference type="InterPro" id="IPR037031">
    <property type="entry name" value="AstB_sf"/>
</dbReference>
<dbReference type="InterPro" id="IPR007079">
    <property type="entry name" value="SuccinylArg_d-Hdrlase_AstB"/>
</dbReference>
<dbReference type="NCBIfam" id="NF009789">
    <property type="entry name" value="PRK13281.1"/>
    <property type="match status" value="1"/>
</dbReference>
<dbReference type="PANTHER" id="PTHR30420">
    <property type="entry name" value="N-SUCCINYLARGININE DIHYDROLASE"/>
    <property type="match status" value="1"/>
</dbReference>
<dbReference type="PANTHER" id="PTHR30420:SF2">
    <property type="entry name" value="N-SUCCINYLARGININE DIHYDROLASE"/>
    <property type="match status" value="1"/>
</dbReference>
<dbReference type="Pfam" id="PF04996">
    <property type="entry name" value="AstB"/>
    <property type="match status" value="1"/>
</dbReference>
<dbReference type="SUPFAM" id="SSF55909">
    <property type="entry name" value="Pentein"/>
    <property type="match status" value="1"/>
</dbReference>
<organism>
    <name type="scientific">Rhizorhabdus wittichii (strain DSM 6014 / CCUG 31198 / JCM 15750 / NBRC 105917 / EY 4224 / RW1)</name>
    <name type="common">Sphingomonas wittichii</name>
    <dbReference type="NCBI Taxonomy" id="392499"/>
    <lineage>
        <taxon>Bacteria</taxon>
        <taxon>Pseudomonadati</taxon>
        <taxon>Pseudomonadota</taxon>
        <taxon>Alphaproteobacteria</taxon>
        <taxon>Sphingomonadales</taxon>
        <taxon>Sphingomonadaceae</taxon>
        <taxon>Rhizorhabdus</taxon>
    </lineage>
</organism>
<comment type="function">
    <text evidence="1">Catalyzes the hydrolysis of N(2)-succinylarginine into N(2)-succinylornithine, ammonia and CO(2).</text>
</comment>
<comment type="catalytic activity">
    <reaction evidence="1">
        <text>N(2)-succinyl-L-arginine + 2 H2O + 2 H(+) = N(2)-succinyl-L-ornithine + 2 NH4(+) + CO2</text>
        <dbReference type="Rhea" id="RHEA:19533"/>
        <dbReference type="ChEBI" id="CHEBI:15377"/>
        <dbReference type="ChEBI" id="CHEBI:15378"/>
        <dbReference type="ChEBI" id="CHEBI:16526"/>
        <dbReference type="ChEBI" id="CHEBI:28938"/>
        <dbReference type="ChEBI" id="CHEBI:58241"/>
        <dbReference type="ChEBI" id="CHEBI:58514"/>
        <dbReference type="EC" id="3.5.3.23"/>
    </reaction>
</comment>
<comment type="pathway">
    <text evidence="1">Amino-acid degradation; L-arginine degradation via AST pathway; L-glutamate and succinate from L-arginine: step 2/5.</text>
</comment>
<comment type="subunit">
    <text evidence="1">Homodimer.</text>
</comment>
<comment type="similarity">
    <text evidence="1">Belongs to the succinylarginine dihydrolase family.</text>
</comment>
<keyword id="KW-0056">Arginine metabolism</keyword>
<keyword id="KW-0378">Hydrolase</keyword>
<keyword id="KW-1185">Reference proteome</keyword>